<reference key="1">
    <citation type="submission" date="2008-02" db="EMBL/GenBank/DDBJ databases">
        <title>Complete sequence of Escherichia coli C str. ATCC 8739.</title>
        <authorList>
            <person name="Copeland A."/>
            <person name="Lucas S."/>
            <person name="Lapidus A."/>
            <person name="Glavina del Rio T."/>
            <person name="Dalin E."/>
            <person name="Tice H."/>
            <person name="Bruce D."/>
            <person name="Goodwin L."/>
            <person name="Pitluck S."/>
            <person name="Kiss H."/>
            <person name="Brettin T."/>
            <person name="Detter J.C."/>
            <person name="Han C."/>
            <person name="Kuske C.R."/>
            <person name="Schmutz J."/>
            <person name="Larimer F."/>
            <person name="Land M."/>
            <person name="Hauser L."/>
            <person name="Kyrpides N."/>
            <person name="Mikhailova N."/>
            <person name="Ingram L."/>
            <person name="Richardson P."/>
        </authorList>
    </citation>
    <scope>NUCLEOTIDE SEQUENCE [LARGE SCALE GENOMIC DNA]</scope>
    <source>
        <strain>ATCC 8739 / DSM 1576 / NBRC 3972 / NCIMB 8545 / WDCM 00012 / Crooks</strain>
    </source>
</reference>
<accession>B1IQT4</accession>
<comment type="function">
    <text evidence="1">Cell wall formation. Adds enolpyruvyl to UDP-N-acetylglucosamine.</text>
</comment>
<comment type="catalytic activity">
    <reaction evidence="1">
        <text>phosphoenolpyruvate + UDP-N-acetyl-alpha-D-glucosamine = UDP-N-acetyl-3-O-(1-carboxyvinyl)-alpha-D-glucosamine + phosphate</text>
        <dbReference type="Rhea" id="RHEA:18681"/>
        <dbReference type="ChEBI" id="CHEBI:43474"/>
        <dbReference type="ChEBI" id="CHEBI:57705"/>
        <dbReference type="ChEBI" id="CHEBI:58702"/>
        <dbReference type="ChEBI" id="CHEBI:68483"/>
        <dbReference type="EC" id="2.5.1.7"/>
    </reaction>
</comment>
<comment type="pathway">
    <text evidence="1">Cell wall biogenesis; peptidoglycan biosynthesis.</text>
</comment>
<comment type="subcellular location">
    <subcellularLocation>
        <location evidence="1">Cytoplasm</location>
    </subcellularLocation>
</comment>
<comment type="similarity">
    <text evidence="1">Belongs to the EPSP synthase family. MurA subfamily.</text>
</comment>
<dbReference type="EC" id="2.5.1.7" evidence="1"/>
<dbReference type="EMBL" id="CP000946">
    <property type="protein sequence ID" value="ACA76188.1"/>
    <property type="molecule type" value="Genomic_DNA"/>
</dbReference>
<dbReference type="RefSeq" id="WP_000357259.1">
    <property type="nucleotide sequence ID" value="NZ_MTFT01000027.1"/>
</dbReference>
<dbReference type="SMR" id="B1IQT4"/>
<dbReference type="GeneID" id="93778792"/>
<dbReference type="KEGG" id="ecl:EcolC_0511"/>
<dbReference type="HOGENOM" id="CLU_027387_0_0_6"/>
<dbReference type="UniPathway" id="UPA00219"/>
<dbReference type="GO" id="GO:0005737">
    <property type="term" value="C:cytoplasm"/>
    <property type="evidence" value="ECO:0007669"/>
    <property type="project" value="UniProtKB-SubCell"/>
</dbReference>
<dbReference type="GO" id="GO:0008760">
    <property type="term" value="F:UDP-N-acetylglucosamine 1-carboxyvinyltransferase activity"/>
    <property type="evidence" value="ECO:0007669"/>
    <property type="project" value="UniProtKB-UniRule"/>
</dbReference>
<dbReference type="GO" id="GO:0051301">
    <property type="term" value="P:cell division"/>
    <property type="evidence" value="ECO:0007669"/>
    <property type="project" value="UniProtKB-KW"/>
</dbReference>
<dbReference type="GO" id="GO:0071555">
    <property type="term" value="P:cell wall organization"/>
    <property type="evidence" value="ECO:0007669"/>
    <property type="project" value="UniProtKB-KW"/>
</dbReference>
<dbReference type="GO" id="GO:0009252">
    <property type="term" value="P:peptidoglycan biosynthetic process"/>
    <property type="evidence" value="ECO:0007669"/>
    <property type="project" value="UniProtKB-UniRule"/>
</dbReference>
<dbReference type="GO" id="GO:0008360">
    <property type="term" value="P:regulation of cell shape"/>
    <property type="evidence" value="ECO:0007669"/>
    <property type="project" value="UniProtKB-KW"/>
</dbReference>
<dbReference type="GO" id="GO:0019277">
    <property type="term" value="P:UDP-N-acetylgalactosamine biosynthetic process"/>
    <property type="evidence" value="ECO:0007669"/>
    <property type="project" value="InterPro"/>
</dbReference>
<dbReference type="CDD" id="cd01555">
    <property type="entry name" value="UdpNAET"/>
    <property type="match status" value="1"/>
</dbReference>
<dbReference type="FunFam" id="3.65.10.10:FF:000002">
    <property type="entry name" value="UDP-N-acetylglucosamine 1-carboxyvinyltransferase"/>
    <property type="match status" value="1"/>
</dbReference>
<dbReference type="Gene3D" id="3.65.10.10">
    <property type="entry name" value="Enolpyruvate transferase domain"/>
    <property type="match status" value="2"/>
</dbReference>
<dbReference type="HAMAP" id="MF_00111">
    <property type="entry name" value="MurA"/>
    <property type="match status" value="1"/>
</dbReference>
<dbReference type="InterPro" id="IPR001986">
    <property type="entry name" value="Enolpyruvate_Tfrase_dom"/>
</dbReference>
<dbReference type="InterPro" id="IPR036968">
    <property type="entry name" value="Enolpyruvate_Tfrase_sf"/>
</dbReference>
<dbReference type="InterPro" id="IPR050068">
    <property type="entry name" value="MurA_subfamily"/>
</dbReference>
<dbReference type="InterPro" id="IPR013792">
    <property type="entry name" value="RNA3'P_cycl/enolpyr_Trfase_a/b"/>
</dbReference>
<dbReference type="InterPro" id="IPR005750">
    <property type="entry name" value="UDP_GlcNAc_COvinyl_MurA"/>
</dbReference>
<dbReference type="NCBIfam" id="TIGR01072">
    <property type="entry name" value="murA"/>
    <property type="match status" value="1"/>
</dbReference>
<dbReference type="NCBIfam" id="NF006873">
    <property type="entry name" value="PRK09369.1"/>
    <property type="match status" value="1"/>
</dbReference>
<dbReference type="PANTHER" id="PTHR43783">
    <property type="entry name" value="UDP-N-ACETYLGLUCOSAMINE 1-CARBOXYVINYLTRANSFERASE"/>
    <property type="match status" value="1"/>
</dbReference>
<dbReference type="PANTHER" id="PTHR43783:SF1">
    <property type="entry name" value="UDP-N-ACETYLGLUCOSAMINE 1-CARBOXYVINYLTRANSFERASE"/>
    <property type="match status" value="1"/>
</dbReference>
<dbReference type="Pfam" id="PF00275">
    <property type="entry name" value="EPSP_synthase"/>
    <property type="match status" value="1"/>
</dbReference>
<dbReference type="SUPFAM" id="SSF55205">
    <property type="entry name" value="EPT/RTPC-like"/>
    <property type="match status" value="1"/>
</dbReference>
<feature type="chain" id="PRO_1000075970" description="UDP-N-acetylglucosamine 1-carboxyvinyltransferase">
    <location>
        <begin position="1"/>
        <end position="419"/>
    </location>
</feature>
<feature type="active site" description="Proton donor" evidence="1">
    <location>
        <position position="115"/>
    </location>
</feature>
<feature type="binding site" evidence="1">
    <location>
        <begin position="22"/>
        <end position="23"/>
    </location>
    <ligand>
        <name>phosphoenolpyruvate</name>
        <dbReference type="ChEBI" id="CHEBI:58702"/>
    </ligand>
</feature>
<feature type="binding site" evidence="1">
    <location>
        <position position="91"/>
    </location>
    <ligand>
        <name>UDP-N-acetyl-alpha-D-glucosamine</name>
        <dbReference type="ChEBI" id="CHEBI:57705"/>
    </ligand>
</feature>
<feature type="binding site" evidence="1">
    <location>
        <begin position="120"/>
        <end position="124"/>
    </location>
    <ligand>
        <name>UDP-N-acetyl-alpha-D-glucosamine</name>
        <dbReference type="ChEBI" id="CHEBI:57705"/>
    </ligand>
</feature>
<feature type="binding site" evidence="1">
    <location>
        <begin position="160"/>
        <end position="163"/>
    </location>
    <ligand>
        <name>UDP-N-acetyl-alpha-D-glucosamine</name>
        <dbReference type="ChEBI" id="CHEBI:57705"/>
    </ligand>
</feature>
<feature type="binding site" evidence="1">
    <location>
        <position position="305"/>
    </location>
    <ligand>
        <name>UDP-N-acetyl-alpha-D-glucosamine</name>
        <dbReference type="ChEBI" id="CHEBI:57705"/>
    </ligand>
</feature>
<feature type="binding site" evidence="1">
    <location>
        <position position="327"/>
    </location>
    <ligand>
        <name>UDP-N-acetyl-alpha-D-glucosamine</name>
        <dbReference type="ChEBI" id="CHEBI:57705"/>
    </ligand>
</feature>
<feature type="modified residue" description="2-(S-cysteinyl)pyruvic acid O-phosphothioketal" evidence="1">
    <location>
        <position position="115"/>
    </location>
</feature>
<protein>
    <recommendedName>
        <fullName evidence="1">UDP-N-acetylglucosamine 1-carboxyvinyltransferase</fullName>
        <ecNumber evidence="1">2.5.1.7</ecNumber>
    </recommendedName>
    <alternativeName>
        <fullName evidence="1">Enoylpyruvate transferase</fullName>
    </alternativeName>
    <alternativeName>
        <fullName evidence="1">UDP-N-acetylglucosamine enolpyruvyl transferase</fullName>
        <shortName evidence="1">EPT</shortName>
    </alternativeName>
</protein>
<proteinExistence type="inferred from homology"/>
<organism>
    <name type="scientific">Escherichia coli (strain ATCC 8739 / DSM 1576 / NBRC 3972 / NCIMB 8545 / WDCM 00012 / Crooks)</name>
    <dbReference type="NCBI Taxonomy" id="481805"/>
    <lineage>
        <taxon>Bacteria</taxon>
        <taxon>Pseudomonadati</taxon>
        <taxon>Pseudomonadota</taxon>
        <taxon>Gammaproteobacteria</taxon>
        <taxon>Enterobacterales</taxon>
        <taxon>Enterobacteriaceae</taxon>
        <taxon>Escherichia</taxon>
    </lineage>
</organism>
<keyword id="KW-0131">Cell cycle</keyword>
<keyword id="KW-0132">Cell division</keyword>
<keyword id="KW-0133">Cell shape</keyword>
<keyword id="KW-0961">Cell wall biogenesis/degradation</keyword>
<keyword id="KW-0963">Cytoplasm</keyword>
<keyword id="KW-0573">Peptidoglycan synthesis</keyword>
<keyword id="KW-0670">Pyruvate</keyword>
<keyword id="KW-0808">Transferase</keyword>
<evidence type="ECO:0000255" key="1">
    <source>
        <dbReference type="HAMAP-Rule" id="MF_00111"/>
    </source>
</evidence>
<name>MURA_ECOLC</name>
<gene>
    <name evidence="1" type="primary">murA</name>
    <name type="ordered locus">EcolC_0511</name>
</gene>
<sequence length="419" mass="44818">MDKFRVQGPTKLQGEVTISGAKNAALPILFAALLAEEPVEIQNVPKLKDVDTSMKLLSQLGAKVERNGSVHIDARDVNVFCAPYDLVKTMRASIWALGPLVARFGQGQVSLPGGCTIGARPVDLHISGLEQLGATIKLEEGYVKASVDGRLKGAHIVMDKVSVGATVTIMCAATLAEGTTIIENAAREPEIVDTANFLITLGAKISGQGTDRIVIEGVERLGGGVYRVLPDRIETGTFLVAAAISRGKIICRNAQPDTLDAVLAKLRDAGADIEVGEDWISLDMHGKRPKAVNVRTAPHPAFPTDMQAQFTLLNLVAEGTGFITETVFENRFMHVPELSRMGAHAEIESNTVICHGVEKLSGAQVMATDLRASASLVLAGCIAEGTTVVDRIYHIDRGYERIEDKLRALGANIERVKGE</sequence>